<name>UREE_PSEAE</name>
<gene>
    <name evidence="1" type="primary">ureE</name>
    <name type="ordered locus">PA4891</name>
</gene>
<dbReference type="EMBL" id="AE004091">
    <property type="protein sequence ID" value="AAG08276.1"/>
    <property type="molecule type" value="Genomic_DNA"/>
</dbReference>
<dbReference type="PIR" id="E83034">
    <property type="entry name" value="E83034"/>
</dbReference>
<dbReference type="RefSeq" id="NP_253578.1">
    <property type="nucleotide sequence ID" value="NC_002516.2"/>
</dbReference>
<dbReference type="RefSeq" id="WP_003095526.1">
    <property type="nucleotide sequence ID" value="NZ_QZGE01000002.1"/>
</dbReference>
<dbReference type="SMR" id="Q9HUS2"/>
<dbReference type="STRING" id="208964.PA4891"/>
<dbReference type="PaxDb" id="208964-PA4891"/>
<dbReference type="DNASU" id="882294"/>
<dbReference type="GeneID" id="882294"/>
<dbReference type="KEGG" id="pae:PA4891"/>
<dbReference type="PATRIC" id="fig|208964.12.peg.5124"/>
<dbReference type="PseudoCAP" id="PA4891"/>
<dbReference type="HOGENOM" id="CLU_093757_2_0_6"/>
<dbReference type="InParanoid" id="Q9HUS2"/>
<dbReference type="OrthoDB" id="5421304at2"/>
<dbReference type="PhylomeDB" id="Q9HUS2"/>
<dbReference type="BioCyc" id="PAER208964:G1FZ6-5005-MONOMER"/>
<dbReference type="Proteomes" id="UP000002438">
    <property type="component" value="Chromosome"/>
</dbReference>
<dbReference type="GO" id="GO:0005737">
    <property type="term" value="C:cytoplasm"/>
    <property type="evidence" value="ECO:0007669"/>
    <property type="project" value="UniProtKB-SubCell"/>
</dbReference>
<dbReference type="GO" id="GO:0016151">
    <property type="term" value="F:nickel cation binding"/>
    <property type="evidence" value="ECO:0007669"/>
    <property type="project" value="UniProtKB-UniRule"/>
</dbReference>
<dbReference type="GO" id="GO:0051082">
    <property type="term" value="F:unfolded protein binding"/>
    <property type="evidence" value="ECO:0007669"/>
    <property type="project" value="UniProtKB-UniRule"/>
</dbReference>
<dbReference type="GO" id="GO:0006457">
    <property type="term" value="P:protein folding"/>
    <property type="evidence" value="ECO:0007669"/>
    <property type="project" value="InterPro"/>
</dbReference>
<dbReference type="GO" id="GO:0065003">
    <property type="term" value="P:protein-containing complex assembly"/>
    <property type="evidence" value="ECO:0007669"/>
    <property type="project" value="InterPro"/>
</dbReference>
<dbReference type="GO" id="GO:0019627">
    <property type="term" value="P:urea metabolic process"/>
    <property type="evidence" value="ECO:0007669"/>
    <property type="project" value="InterPro"/>
</dbReference>
<dbReference type="CDD" id="cd00571">
    <property type="entry name" value="UreE"/>
    <property type="match status" value="1"/>
</dbReference>
<dbReference type="Gene3D" id="2.60.260.20">
    <property type="entry name" value="Urease metallochaperone UreE, N-terminal domain"/>
    <property type="match status" value="1"/>
</dbReference>
<dbReference type="Gene3D" id="3.30.70.790">
    <property type="entry name" value="UreE, C-terminal domain"/>
    <property type="match status" value="1"/>
</dbReference>
<dbReference type="HAMAP" id="MF_00822">
    <property type="entry name" value="UreE"/>
    <property type="match status" value="1"/>
</dbReference>
<dbReference type="InterPro" id="IPR012406">
    <property type="entry name" value="UreE"/>
</dbReference>
<dbReference type="InterPro" id="IPR007864">
    <property type="entry name" value="UreE_C_dom"/>
</dbReference>
<dbReference type="InterPro" id="IPR004029">
    <property type="entry name" value="UreE_N"/>
</dbReference>
<dbReference type="InterPro" id="IPR036118">
    <property type="entry name" value="UreE_N_sf"/>
</dbReference>
<dbReference type="NCBIfam" id="NF009751">
    <property type="entry name" value="PRK13261.1-1"/>
    <property type="match status" value="1"/>
</dbReference>
<dbReference type="NCBIfam" id="NF009753">
    <property type="entry name" value="PRK13261.1-5"/>
    <property type="match status" value="1"/>
</dbReference>
<dbReference type="Pfam" id="PF05194">
    <property type="entry name" value="UreE_C"/>
    <property type="match status" value="1"/>
</dbReference>
<dbReference type="Pfam" id="PF02814">
    <property type="entry name" value="UreE_N"/>
    <property type="match status" value="1"/>
</dbReference>
<dbReference type="PIRSF" id="PIRSF036402">
    <property type="entry name" value="Ureas_acces_UreE"/>
    <property type="match status" value="1"/>
</dbReference>
<dbReference type="SMART" id="SM00988">
    <property type="entry name" value="UreE_N"/>
    <property type="match status" value="1"/>
</dbReference>
<dbReference type="SUPFAM" id="SSF69737">
    <property type="entry name" value="Urease metallochaperone UreE, C-terminal domain"/>
    <property type="match status" value="1"/>
</dbReference>
<dbReference type="SUPFAM" id="SSF69287">
    <property type="entry name" value="Urease metallochaperone UreE, N-terminal domain"/>
    <property type="match status" value="1"/>
</dbReference>
<proteinExistence type="inferred from homology"/>
<keyword id="KW-0143">Chaperone</keyword>
<keyword id="KW-0963">Cytoplasm</keyword>
<keyword id="KW-0533">Nickel</keyword>
<keyword id="KW-0996">Nickel insertion</keyword>
<keyword id="KW-1185">Reference proteome</keyword>
<reference key="1">
    <citation type="journal article" date="2000" name="Nature">
        <title>Complete genome sequence of Pseudomonas aeruginosa PAO1, an opportunistic pathogen.</title>
        <authorList>
            <person name="Stover C.K."/>
            <person name="Pham X.-Q.T."/>
            <person name="Erwin A.L."/>
            <person name="Mizoguchi S.D."/>
            <person name="Warrener P."/>
            <person name="Hickey M.J."/>
            <person name="Brinkman F.S.L."/>
            <person name="Hufnagle W.O."/>
            <person name="Kowalik D.J."/>
            <person name="Lagrou M."/>
            <person name="Garber R.L."/>
            <person name="Goltry L."/>
            <person name="Tolentino E."/>
            <person name="Westbrock-Wadman S."/>
            <person name="Yuan Y."/>
            <person name="Brody L.L."/>
            <person name="Coulter S.N."/>
            <person name="Folger K.R."/>
            <person name="Kas A."/>
            <person name="Larbig K."/>
            <person name="Lim R.M."/>
            <person name="Smith K.A."/>
            <person name="Spencer D.H."/>
            <person name="Wong G.K.-S."/>
            <person name="Wu Z."/>
            <person name="Paulsen I.T."/>
            <person name="Reizer J."/>
            <person name="Saier M.H. Jr."/>
            <person name="Hancock R.E.W."/>
            <person name="Lory S."/>
            <person name="Olson M.V."/>
        </authorList>
    </citation>
    <scope>NUCLEOTIDE SEQUENCE [LARGE SCALE GENOMIC DNA]</scope>
    <source>
        <strain>ATCC 15692 / DSM 22644 / CIP 104116 / JCM 14847 / LMG 12228 / 1C / PRS 101 / PAO1</strain>
    </source>
</reference>
<feature type="chain" id="PRO_0000223421" description="Urease accessory protein UreE">
    <location>
        <begin position="1"/>
        <end position="167"/>
    </location>
</feature>
<accession>Q9HUS2</accession>
<evidence type="ECO:0000255" key="1">
    <source>
        <dbReference type="HAMAP-Rule" id="MF_00822"/>
    </source>
</evidence>
<comment type="function">
    <text evidence="1">Involved in urease metallocenter assembly. Binds nickel. Probably functions as a nickel donor during metallocenter assembly.</text>
</comment>
<comment type="subcellular location">
    <subcellularLocation>
        <location evidence="1">Cytoplasm</location>
    </subcellularLocation>
</comment>
<comment type="similarity">
    <text evidence="1">Belongs to the UreE family.</text>
</comment>
<sequence length="167" mass="18812">MLVIHQRLPARSPRWDEELHLTYEARSKSRLRCFAASGEEVGLFLERGQPPLADGDCLEARDGRLVRVVARSERLLHVTCASPLELTRAAYHLGNRHVALQVGDGWLRLLDDYVLKAMLEQLGATVEAIEAPFQPEHGAYGGGHHHSHHGEAEFNYAPRLHQFGVRR</sequence>
<organism>
    <name type="scientific">Pseudomonas aeruginosa (strain ATCC 15692 / DSM 22644 / CIP 104116 / JCM 14847 / LMG 12228 / 1C / PRS 101 / PAO1)</name>
    <dbReference type="NCBI Taxonomy" id="208964"/>
    <lineage>
        <taxon>Bacteria</taxon>
        <taxon>Pseudomonadati</taxon>
        <taxon>Pseudomonadota</taxon>
        <taxon>Gammaproteobacteria</taxon>
        <taxon>Pseudomonadales</taxon>
        <taxon>Pseudomonadaceae</taxon>
        <taxon>Pseudomonas</taxon>
    </lineage>
</organism>
<protein>
    <recommendedName>
        <fullName evidence="1">Urease accessory protein UreE</fullName>
    </recommendedName>
</protein>